<protein>
    <recommendedName>
        <fullName evidence="1">Asparagine--tRNA ligase</fullName>
        <ecNumber evidence="1">6.1.1.22</ecNumber>
    </recommendedName>
    <alternativeName>
        <fullName evidence="1">Asparaginyl-tRNA synthetase</fullName>
        <shortName evidence="1">AsnRS</shortName>
    </alternativeName>
</protein>
<gene>
    <name evidence="1" type="primary">asnS</name>
    <name type="ordered locus">XAC1618</name>
</gene>
<organism>
    <name type="scientific">Xanthomonas axonopodis pv. citri (strain 306)</name>
    <dbReference type="NCBI Taxonomy" id="190486"/>
    <lineage>
        <taxon>Bacteria</taxon>
        <taxon>Pseudomonadati</taxon>
        <taxon>Pseudomonadota</taxon>
        <taxon>Gammaproteobacteria</taxon>
        <taxon>Lysobacterales</taxon>
        <taxon>Lysobacteraceae</taxon>
        <taxon>Xanthomonas</taxon>
    </lineage>
</organism>
<feature type="chain" id="PRO_0000176479" description="Asparagine--tRNA ligase">
    <location>
        <begin position="1"/>
        <end position="464"/>
    </location>
</feature>
<comment type="catalytic activity">
    <reaction evidence="1">
        <text>tRNA(Asn) + L-asparagine + ATP = L-asparaginyl-tRNA(Asn) + AMP + diphosphate + H(+)</text>
        <dbReference type="Rhea" id="RHEA:11180"/>
        <dbReference type="Rhea" id="RHEA-COMP:9659"/>
        <dbReference type="Rhea" id="RHEA-COMP:9674"/>
        <dbReference type="ChEBI" id="CHEBI:15378"/>
        <dbReference type="ChEBI" id="CHEBI:30616"/>
        <dbReference type="ChEBI" id="CHEBI:33019"/>
        <dbReference type="ChEBI" id="CHEBI:58048"/>
        <dbReference type="ChEBI" id="CHEBI:78442"/>
        <dbReference type="ChEBI" id="CHEBI:78515"/>
        <dbReference type="ChEBI" id="CHEBI:456215"/>
        <dbReference type="EC" id="6.1.1.22"/>
    </reaction>
</comment>
<comment type="subunit">
    <text evidence="1">Homodimer.</text>
</comment>
<comment type="subcellular location">
    <subcellularLocation>
        <location evidence="1">Cytoplasm</location>
    </subcellularLocation>
</comment>
<comment type="similarity">
    <text evidence="1">Belongs to the class-II aminoacyl-tRNA synthetase family.</text>
</comment>
<dbReference type="EC" id="6.1.1.22" evidence="1"/>
<dbReference type="EMBL" id="AE008923">
    <property type="protein sequence ID" value="AAM36486.1"/>
    <property type="molecule type" value="Genomic_DNA"/>
</dbReference>
<dbReference type="RefSeq" id="WP_011051034.1">
    <property type="nucleotide sequence ID" value="NC_003919.1"/>
</dbReference>
<dbReference type="SMR" id="Q8PM16"/>
<dbReference type="GeneID" id="66910778"/>
<dbReference type="KEGG" id="xac:XAC1618"/>
<dbReference type="eggNOG" id="COG0017">
    <property type="taxonomic scope" value="Bacteria"/>
</dbReference>
<dbReference type="HOGENOM" id="CLU_004553_2_0_6"/>
<dbReference type="Proteomes" id="UP000000576">
    <property type="component" value="Chromosome"/>
</dbReference>
<dbReference type="GO" id="GO:0005737">
    <property type="term" value="C:cytoplasm"/>
    <property type="evidence" value="ECO:0007669"/>
    <property type="project" value="UniProtKB-SubCell"/>
</dbReference>
<dbReference type="GO" id="GO:0004816">
    <property type="term" value="F:asparagine-tRNA ligase activity"/>
    <property type="evidence" value="ECO:0007669"/>
    <property type="project" value="UniProtKB-UniRule"/>
</dbReference>
<dbReference type="GO" id="GO:0005524">
    <property type="term" value="F:ATP binding"/>
    <property type="evidence" value="ECO:0007669"/>
    <property type="project" value="UniProtKB-UniRule"/>
</dbReference>
<dbReference type="GO" id="GO:0003676">
    <property type="term" value="F:nucleic acid binding"/>
    <property type="evidence" value="ECO:0007669"/>
    <property type="project" value="InterPro"/>
</dbReference>
<dbReference type="GO" id="GO:0006421">
    <property type="term" value="P:asparaginyl-tRNA aminoacylation"/>
    <property type="evidence" value="ECO:0007669"/>
    <property type="project" value="UniProtKB-UniRule"/>
</dbReference>
<dbReference type="CDD" id="cd00776">
    <property type="entry name" value="AsxRS_core"/>
    <property type="match status" value="1"/>
</dbReference>
<dbReference type="CDD" id="cd04318">
    <property type="entry name" value="EcAsnRS_like_N"/>
    <property type="match status" value="1"/>
</dbReference>
<dbReference type="FunFam" id="3.30.930.10:FF:000016">
    <property type="entry name" value="Asparagine--tRNA ligase"/>
    <property type="match status" value="1"/>
</dbReference>
<dbReference type="Gene3D" id="3.30.930.10">
    <property type="entry name" value="Bira Bifunctional Protein, Domain 2"/>
    <property type="match status" value="1"/>
</dbReference>
<dbReference type="Gene3D" id="2.40.50.140">
    <property type="entry name" value="Nucleic acid-binding proteins"/>
    <property type="match status" value="1"/>
</dbReference>
<dbReference type="HAMAP" id="MF_00534">
    <property type="entry name" value="Asn_tRNA_synth"/>
    <property type="match status" value="1"/>
</dbReference>
<dbReference type="InterPro" id="IPR004364">
    <property type="entry name" value="Aa-tRNA-synt_II"/>
</dbReference>
<dbReference type="InterPro" id="IPR006195">
    <property type="entry name" value="aa-tRNA-synth_II"/>
</dbReference>
<dbReference type="InterPro" id="IPR045864">
    <property type="entry name" value="aa-tRNA-synth_II/BPL/LPL"/>
</dbReference>
<dbReference type="InterPro" id="IPR004522">
    <property type="entry name" value="Asn-tRNA-ligase"/>
</dbReference>
<dbReference type="InterPro" id="IPR002312">
    <property type="entry name" value="Asp/Asn-tRNA-synth_IIb"/>
</dbReference>
<dbReference type="InterPro" id="IPR012340">
    <property type="entry name" value="NA-bd_OB-fold"/>
</dbReference>
<dbReference type="InterPro" id="IPR004365">
    <property type="entry name" value="NA-bd_OB_tRNA"/>
</dbReference>
<dbReference type="NCBIfam" id="TIGR00457">
    <property type="entry name" value="asnS"/>
    <property type="match status" value="1"/>
</dbReference>
<dbReference type="NCBIfam" id="NF003037">
    <property type="entry name" value="PRK03932.1"/>
    <property type="match status" value="1"/>
</dbReference>
<dbReference type="PANTHER" id="PTHR22594:SF34">
    <property type="entry name" value="ASPARAGINE--TRNA LIGASE, MITOCHONDRIAL-RELATED"/>
    <property type="match status" value="1"/>
</dbReference>
<dbReference type="PANTHER" id="PTHR22594">
    <property type="entry name" value="ASPARTYL/LYSYL-TRNA SYNTHETASE"/>
    <property type="match status" value="1"/>
</dbReference>
<dbReference type="Pfam" id="PF00152">
    <property type="entry name" value="tRNA-synt_2"/>
    <property type="match status" value="1"/>
</dbReference>
<dbReference type="Pfam" id="PF01336">
    <property type="entry name" value="tRNA_anti-codon"/>
    <property type="match status" value="1"/>
</dbReference>
<dbReference type="PRINTS" id="PR01042">
    <property type="entry name" value="TRNASYNTHASP"/>
</dbReference>
<dbReference type="SUPFAM" id="SSF55681">
    <property type="entry name" value="Class II aaRS and biotin synthetases"/>
    <property type="match status" value="1"/>
</dbReference>
<dbReference type="SUPFAM" id="SSF50249">
    <property type="entry name" value="Nucleic acid-binding proteins"/>
    <property type="match status" value="1"/>
</dbReference>
<dbReference type="PROSITE" id="PS50862">
    <property type="entry name" value="AA_TRNA_LIGASE_II"/>
    <property type="match status" value="1"/>
</dbReference>
<keyword id="KW-0030">Aminoacyl-tRNA synthetase</keyword>
<keyword id="KW-0067">ATP-binding</keyword>
<keyword id="KW-0963">Cytoplasm</keyword>
<keyword id="KW-0436">Ligase</keyword>
<keyword id="KW-0547">Nucleotide-binding</keyword>
<keyword id="KW-0648">Protein biosynthesis</keyword>
<sequence length="464" mass="51811">MTVVSVEHALAGKLPEGGEVTVRGWVRTLRGSAGLAFINVTDGSCFAPIQVVANDTLPNFDEIKRLTSGCSLIAKGVLVKSQGKGQSFEIQASGVDVVGWVEDPLTYPIQPKPMTPEFLREVAHLRPRTNLFGAVTRIRNCLAQAVHRFFHQNGFNWISTPIITTSDAEGAGQMFRVSTLDMVNLPRDASGAVDFSRDFFGKETFLTVSGQLNVEAYCLALSKVYTFGPTFRAENSHTTRHLAEFWMIEPEIAFADLAEDARLAEQFLKYLFRAVLDERGDDLAFLAERVDKNAIAKLEAFINAPFEQIDYTDAVKLLQNSGKKFDFPVEWGLDLQTEHERWLTEEHIGRPVVVTNYPEHIKAFYMRLNDDGKTVAAMDVLAPGIGEIIGGSQREERLDVLDARMAQFGLDKEHYSWYRDFRRYGSVPHAGFGLGFERLVVYVCGLSNIRDAIPYPRAPGSAEF</sequence>
<evidence type="ECO:0000255" key="1">
    <source>
        <dbReference type="HAMAP-Rule" id="MF_00534"/>
    </source>
</evidence>
<reference key="1">
    <citation type="journal article" date="2002" name="Nature">
        <title>Comparison of the genomes of two Xanthomonas pathogens with differing host specificities.</title>
        <authorList>
            <person name="da Silva A.C.R."/>
            <person name="Ferro J.A."/>
            <person name="Reinach F.C."/>
            <person name="Farah C.S."/>
            <person name="Furlan L.R."/>
            <person name="Quaggio R.B."/>
            <person name="Monteiro-Vitorello C.B."/>
            <person name="Van Sluys M.A."/>
            <person name="Almeida N.F. Jr."/>
            <person name="Alves L.M.C."/>
            <person name="do Amaral A.M."/>
            <person name="Bertolini M.C."/>
            <person name="Camargo L.E.A."/>
            <person name="Camarotte G."/>
            <person name="Cannavan F."/>
            <person name="Cardozo J."/>
            <person name="Chambergo F."/>
            <person name="Ciapina L.P."/>
            <person name="Cicarelli R.M.B."/>
            <person name="Coutinho L.L."/>
            <person name="Cursino-Santos J.R."/>
            <person name="El-Dorry H."/>
            <person name="Faria J.B."/>
            <person name="Ferreira A.J.S."/>
            <person name="Ferreira R.C.C."/>
            <person name="Ferro M.I.T."/>
            <person name="Formighieri E.F."/>
            <person name="Franco M.C."/>
            <person name="Greggio C.C."/>
            <person name="Gruber A."/>
            <person name="Katsuyama A.M."/>
            <person name="Kishi L.T."/>
            <person name="Leite R.P."/>
            <person name="Lemos E.G.M."/>
            <person name="Lemos M.V.F."/>
            <person name="Locali E.C."/>
            <person name="Machado M.A."/>
            <person name="Madeira A.M.B.N."/>
            <person name="Martinez-Rossi N.M."/>
            <person name="Martins E.C."/>
            <person name="Meidanis J."/>
            <person name="Menck C.F.M."/>
            <person name="Miyaki C.Y."/>
            <person name="Moon D.H."/>
            <person name="Moreira L.M."/>
            <person name="Novo M.T.M."/>
            <person name="Okura V.K."/>
            <person name="Oliveira M.C."/>
            <person name="Oliveira V.R."/>
            <person name="Pereira H.A."/>
            <person name="Rossi A."/>
            <person name="Sena J.A.D."/>
            <person name="Silva C."/>
            <person name="de Souza R.F."/>
            <person name="Spinola L.A.F."/>
            <person name="Takita M.A."/>
            <person name="Tamura R.E."/>
            <person name="Teixeira E.C."/>
            <person name="Tezza R.I.D."/>
            <person name="Trindade dos Santos M."/>
            <person name="Truffi D."/>
            <person name="Tsai S.M."/>
            <person name="White F.F."/>
            <person name="Setubal J.C."/>
            <person name="Kitajima J.P."/>
        </authorList>
    </citation>
    <scope>NUCLEOTIDE SEQUENCE [LARGE SCALE GENOMIC DNA]</scope>
    <source>
        <strain>306</strain>
    </source>
</reference>
<proteinExistence type="inferred from homology"/>
<accession>Q8PM16</accession>
<name>SYN_XANAC</name>